<accession>Q4FTW3</accession>
<evidence type="ECO:0000255" key="1">
    <source>
        <dbReference type="HAMAP-Rule" id="MF_00195"/>
    </source>
</evidence>
<evidence type="ECO:0000256" key="2">
    <source>
        <dbReference type="SAM" id="MobiDB-lite"/>
    </source>
</evidence>
<comment type="function">
    <text evidence="1">GTPase that plays an essential role in the late steps of ribosome biogenesis.</text>
</comment>
<comment type="subunit">
    <text evidence="1">Associates with the 50S ribosomal subunit.</text>
</comment>
<comment type="similarity">
    <text evidence="1">Belongs to the TRAFAC class TrmE-Era-EngA-EngB-Septin-like GTPase superfamily. EngA (Der) GTPase family.</text>
</comment>
<name>DER_PSYA2</name>
<gene>
    <name evidence="1" type="primary">der</name>
    <name type="synonym">engA</name>
    <name type="ordered locus">Psyc_0686</name>
</gene>
<proteinExistence type="inferred from homology"/>
<sequence>MSIKPVVALIGRPNVGKSTLFNQFTKSRQALVADLSGLTRDRQYGDATYEDKAFIVVDTGGIGEADDGRGDIDDYMSEQSYTAIHEADIIVFVVDARAGMIGADAEIGKFLHTLGKPVYVVANKVDGVHDSAPAEFYALGLGEPYPMAASHGRGVGNLLEVLTADMPNQENIIEPRGLKLAIIGRPNVGKSTLVNRLLGEDRVVVFDMPGTTRDSIYIPYKRDGKDYVLIDTAGVRRRGKIDEKVEKFSVIKTLQAIEDSNVTVIVIDAHEGIVDQDLHMIGYALDAGRALVVAINKWDGLTADQKNYIKIEMDRRFNFIPYVKVHQISALHGTGVGNLYPSILRAYQSSMFEVSTNRLTQILQDAVTANPPPTVAGRRIKLRYAHIGGHNPPVIVIHGNQTGSLPKSYQRYLENQFRQVFKLEGTPLNVVFKLNENPYANKSDTPTKAKTQQLRQRERNRAQKFTTKDKKPR</sequence>
<reference key="1">
    <citation type="journal article" date="2010" name="Appl. Environ. Microbiol.">
        <title>The genome sequence of Psychrobacter arcticus 273-4, a psychroactive Siberian permafrost bacterium, reveals mechanisms for adaptation to low-temperature growth.</title>
        <authorList>
            <person name="Ayala-del-Rio H.L."/>
            <person name="Chain P.S."/>
            <person name="Grzymski J.J."/>
            <person name="Ponder M.A."/>
            <person name="Ivanova N."/>
            <person name="Bergholz P.W."/>
            <person name="Di Bartolo G."/>
            <person name="Hauser L."/>
            <person name="Land M."/>
            <person name="Bakermans C."/>
            <person name="Rodrigues D."/>
            <person name="Klappenbach J."/>
            <person name="Zarka D."/>
            <person name="Larimer F."/>
            <person name="Richardson P."/>
            <person name="Murray A."/>
            <person name="Thomashow M."/>
            <person name="Tiedje J.M."/>
        </authorList>
    </citation>
    <scope>NUCLEOTIDE SEQUENCE [LARGE SCALE GENOMIC DNA]</scope>
    <source>
        <strain>DSM 17307 / VKM B-2377 / 273-4</strain>
    </source>
</reference>
<feature type="chain" id="PRO_1000011708" description="GTPase Der">
    <location>
        <begin position="1"/>
        <end position="473"/>
    </location>
</feature>
<feature type="domain" description="EngA-type G 1">
    <location>
        <begin position="5"/>
        <end position="170"/>
    </location>
</feature>
<feature type="domain" description="EngA-type G 2">
    <location>
        <begin position="178"/>
        <end position="351"/>
    </location>
</feature>
<feature type="domain" description="KH-like" evidence="1">
    <location>
        <begin position="352"/>
        <end position="436"/>
    </location>
</feature>
<feature type="region of interest" description="Disordered" evidence="2">
    <location>
        <begin position="438"/>
        <end position="473"/>
    </location>
</feature>
<feature type="compositionally biased region" description="Polar residues" evidence="2">
    <location>
        <begin position="438"/>
        <end position="454"/>
    </location>
</feature>
<feature type="compositionally biased region" description="Basic and acidic residues" evidence="2">
    <location>
        <begin position="455"/>
        <end position="473"/>
    </location>
</feature>
<feature type="binding site" evidence="1">
    <location>
        <begin position="11"/>
        <end position="18"/>
    </location>
    <ligand>
        <name>GTP</name>
        <dbReference type="ChEBI" id="CHEBI:37565"/>
        <label>1</label>
    </ligand>
</feature>
<feature type="binding site" evidence="1">
    <location>
        <begin position="58"/>
        <end position="62"/>
    </location>
    <ligand>
        <name>GTP</name>
        <dbReference type="ChEBI" id="CHEBI:37565"/>
        <label>1</label>
    </ligand>
</feature>
<feature type="binding site" evidence="1">
    <location>
        <begin position="123"/>
        <end position="126"/>
    </location>
    <ligand>
        <name>GTP</name>
        <dbReference type="ChEBI" id="CHEBI:37565"/>
        <label>1</label>
    </ligand>
</feature>
<feature type="binding site" evidence="1">
    <location>
        <begin position="184"/>
        <end position="191"/>
    </location>
    <ligand>
        <name>GTP</name>
        <dbReference type="ChEBI" id="CHEBI:37565"/>
        <label>2</label>
    </ligand>
</feature>
<feature type="binding site" evidence="1">
    <location>
        <begin position="231"/>
        <end position="235"/>
    </location>
    <ligand>
        <name>GTP</name>
        <dbReference type="ChEBI" id="CHEBI:37565"/>
        <label>2</label>
    </ligand>
</feature>
<feature type="binding site" evidence="1">
    <location>
        <begin position="296"/>
        <end position="299"/>
    </location>
    <ligand>
        <name>GTP</name>
        <dbReference type="ChEBI" id="CHEBI:37565"/>
        <label>2</label>
    </ligand>
</feature>
<dbReference type="EMBL" id="CP000082">
    <property type="protein sequence ID" value="AAZ18545.1"/>
    <property type="molecule type" value="Genomic_DNA"/>
</dbReference>
<dbReference type="RefSeq" id="WP_011279972.1">
    <property type="nucleotide sequence ID" value="NC_007204.1"/>
</dbReference>
<dbReference type="SMR" id="Q4FTW3"/>
<dbReference type="STRING" id="259536.Psyc_0686"/>
<dbReference type="KEGG" id="par:Psyc_0686"/>
<dbReference type="eggNOG" id="COG1160">
    <property type="taxonomic scope" value="Bacteria"/>
</dbReference>
<dbReference type="HOGENOM" id="CLU_016077_6_2_6"/>
<dbReference type="OrthoDB" id="9805918at2"/>
<dbReference type="Proteomes" id="UP000000546">
    <property type="component" value="Chromosome"/>
</dbReference>
<dbReference type="GO" id="GO:0005525">
    <property type="term" value="F:GTP binding"/>
    <property type="evidence" value="ECO:0007669"/>
    <property type="project" value="UniProtKB-UniRule"/>
</dbReference>
<dbReference type="GO" id="GO:0043022">
    <property type="term" value="F:ribosome binding"/>
    <property type="evidence" value="ECO:0007669"/>
    <property type="project" value="TreeGrafter"/>
</dbReference>
<dbReference type="GO" id="GO:0042254">
    <property type="term" value="P:ribosome biogenesis"/>
    <property type="evidence" value="ECO:0007669"/>
    <property type="project" value="UniProtKB-KW"/>
</dbReference>
<dbReference type="CDD" id="cd01894">
    <property type="entry name" value="EngA1"/>
    <property type="match status" value="1"/>
</dbReference>
<dbReference type="CDD" id="cd01895">
    <property type="entry name" value="EngA2"/>
    <property type="match status" value="1"/>
</dbReference>
<dbReference type="FunFam" id="3.30.300.20:FF:000004">
    <property type="entry name" value="GTPase Der"/>
    <property type="match status" value="1"/>
</dbReference>
<dbReference type="FunFam" id="3.40.50.300:FF:000040">
    <property type="entry name" value="GTPase Der"/>
    <property type="match status" value="1"/>
</dbReference>
<dbReference type="FunFam" id="3.40.50.300:FF:000057">
    <property type="entry name" value="GTPase Der"/>
    <property type="match status" value="1"/>
</dbReference>
<dbReference type="Gene3D" id="3.30.300.20">
    <property type="match status" value="1"/>
</dbReference>
<dbReference type="Gene3D" id="3.40.50.300">
    <property type="entry name" value="P-loop containing nucleotide triphosphate hydrolases"/>
    <property type="match status" value="2"/>
</dbReference>
<dbReference type="HAMAP" id="MF_00195">
    <property type="entry name" value="GTPase_Der"/>
    <property type="match status" value="1"/>
</dbReference>
<dbReference type="InterPro" id="IPR031166">
    <property type="entry name" value="G_ENGA"/>
</dbReference>
<dbReference type="InterPro" id="IPR006073">
    <property type="entry name" value="GTP-bd"/>
</dbReference>
<dbReference type="InterPro" id="IPR016484">
    <property type="entry name" value="GTPase_Der"/>
</dbReference>
<dbReference type="InterPro" id="IPR032859">
    <property type="entry name" value="KH_dom-like"/>
</dbReference>
<dbReference type="InterPro" id="IPR015946">
    <property type="entry name" value="KH_dom-like_a/b"/>
</dbReference>
<dbReference type="InterPro" id="IPR027417">
    <property type="entry name" value="P-loop_NTPase"/>
</dbReference>
<dbReference type="InterPro" id="IPR005225">
    <property type="entry name" value="Small_GTP-bd"/>
</dbReference>
<dbReference type="NCBIfam" id="TIGR03594">
    <property type="entry name" value="GTPase_EngA"/>
    <property type="match status" value="1"/>
</dbReference>
<dbReference type="NCBIfam" id="TIGR00231">
    <property type="entry name" value="small_GTP"/>
    <property type="match status" value="2"/>
</dbReference>
<dbReference type="PANTHER" id="PTHR43834">
    <property type="entry name" value="GTPASE DER"/>
    <property type="match status" value="1"/>
</dbReference>
<dbReference type="PANTHER" id="PTHR43834:SF6">
    <property type="entry name" value="GTPASE DER"/>
    <property type="match status" value="1"/>
</dbReference>
<dbReference type="Pfam" id="PF14714">
    <property type="entry name" value="KH_dom-like"/>
    <property type="match status" value="1"/>
</dbReference>
<dbReference type="Pfam" id="PF01926">
    <property type="entry name" value="MMR_HSR1"/>
    <property type="match status" value="2"/>
</dbReference>
<dbReference type="PIRSF" id="PIRSF006485">
    <property type="entry name" value="GTP-binding_EngA"/>
    <property type="match status" value="1"/>
</dbReference>
<dbReference type="PRINTS" id="PR00326">
    <property type="entry name" value="GTP1OBG"/>
</dbReference>
<dbReference type="SUPFAM" id="SSF52540">
    <property type="entry name" value="P-loop containing nucleoside triphosphate hydrolases"/>
    <property type="match status" value="2"/>
</dbReference>
<dbReference type="PROSITE" id="PS51712">
    <property type="entry name" value="G_ENGA"/>
    <property type="match status" value="2"/>
</dbReference>
<protein>
    <recommendedName>
        <fullName evidence="1">GTPase Der</fullName>
    </recommendedName>
    <alternativeName>
        <fullName evidence="1">GTP-binding protein EngA</fullName>
    </alternativeName>
</protein>
<keyword id="KW-0342">GTP-binding</keyword>
<keyword id="KW-0547">Nucleotide-binding</keyword>
<keyword id="KW-1185">Reference proteome</keyword>
<keyword id="KW-0677">Repeat</keyword>
<keyword id="KW-0690">Ribosome biogenesis</keyword>
<organism>
    <name type="scientific">Psychrobacter arcticus (strain DSM 17307 / VKM B-2377 / 273-4)</name>
    <dbReference type="NCBI Taxonomy" id="259536"/>
    <lineage>
        <taxon>Bacteria</taxon>
        <taxon>Pseudomonadati</taxon>
        <taxon>Pseudomonadota</taxon>
        <taxon>Gammaproteobacteria</taxon>
        <taxon>Moraxellales</taxon>
        <taxon>Moraxellaceae</taxon>
        <taxon>Psychrobacter</taxon>
    </lineage>
</organism>